<keyword id="KW-0067">ATP-binding</keyword>
<keyword id="KW-0963">Cytoplasm</keyword>
<keyword id="KW-0227">DNA damage</keyword>
<keyword id="KW-0233">DNA recombination</keyword>
<keyword id="KW-0234">DNA repair</keyword>
<keyword id="KW-0238">DNA-binding</keyword>
<keyword id="KW-0378">Hydrolase</keyword>
<keyword id="KW-0547">Nucleotide-binding</keyword>
<keyword id="KW-1185">Reference proteome</keyword>
<comment type="function">
    <text evidence="1">The RuvA-RuvB-RuvC complex processes Holliday junction (HJ) DNA during genetic recombination and DNA repair, while the RuvA-RuvB complex plays an important role in the rescue of blocked DNA replication forks via replication fork reversal (RFR). RuvA specifically binds to HJ cruciform DNA, conferring on it an open structure. The RuvB hexamer acts as an ATP-dependent pump, pulling dsDNA into and through the RuvAB complex. RuvB forms 2 homohexamers on either side of HJ DNA bound by 1 or 2 RuvA tetramers; 4 subunits per hexamer contact DNA at a time. Coordinated motions by a converter formed by DNA-disengaged RuvB subunits stimulates ATP hydrolysis and nucleotide exchange. Immobilization of the converter enables RuvB to convert the ATP-contained energy into a lever motion, pulling 2 nucleotides of DNA out of the RuvA tetramer per ATP hydrolyzed, thus driving DNA branch migration. The RuvB motors rotate together with the DNA substrate, which together with the progressing nucleotide cycle form the mechanistic basis for DNA recombination by continuous HJ branch migration. Branch migration allows RuvC to scan DNA until it finds its consensus sequence, where it cleaves and resolves cruciform DNA.</text>
</comment>
<comment type="catalytic activity">
    <reaction evidence="1">
        <text>ATP + H2O = ADP + phosphate + H(+)</text>
        <dbReference type="Rhea" id="RHEA:13065"/>
        <dbReference type="ChEBI" id="CHEBI:15377"/>
        <dbReference type="ChEBI" id="CHEBI:15378"/>
        <dbReference type="ChEBI" id="CHEBI:30616"/>
        <dbReference type="ChEBI" id="CHEBI:43474"/>
        <dbReference type="ChEBI" id="CHEBI:456216"/>
    </reaction>
</comment>
<comment type="subunit">
    <text evidence="1">Homohexamer. Forms an RuvA(8)-RuvB(12)-Holliday junction (HJ) complex. HJ DNA is sandwiched between 2 RuvA tetramers; dsDNA enters through RuvA and exits via RuvB. An RuvB hexamer assembles on each DNA strand where it exits the tetramer. Each RuvB hexamer is contacted by two RuvA subunits (via domain III) on 2 adjacent RuvB subunits; this complex drives branch migration. In the full resolvosome a probable DNA-RuvA(4)-RuvB(12)-RuvC(2) complex forms which resolves the HJ.</text>
</comment>
<comment type="subcellular location">
    <subcellularLocation>
        <location evidence="1">Cytoplasm</location>
    </subcellularLocation>
</comment>
<comment type="domain">
    <text evidence="1">Has 3 domains, the large (RuvB-L) and small ATPase (RuvB-S) domains and the C-terminal head (RuvB-H) domain. The head domain binds DNA, while the ATPase domains jointly bind ATP, ADP or are empty depending on the state of the subunit in the translocation cycle. During a single DNA translocation step the structure of each domain remains the same, but their relative positions change.</text>
</comment>
<comment type="similarity">
    <text evidence="1">Belongs to the RuvB family.</text>
</comment>
<dbReference type="EC" id="3.6.4.-" evidence="1"/>
<dbReference type="EMBL" id="AL591688">
    <property type="protein sequence ID" value="CAC47328.1"/>
    <property type="molecule type" value="Genomic_DNA"/>
</dbReference>
<dbReference type="RefSeq" id="NP_386855.1">
    <property type="nucleotide sequence ID" value="NC_003047.1"/>
</dbReference>
<dbReference type="RefSeq" id="WP_003535962.1">
    <property type="nucleotide sequence ID" value="NC_003047.1"/>
</dbReference>
<dbReference type="SMR" id="Q92M92"/>
<dbReference type="EnsemblBacteria" id="CAC47328">
    <property type="protein sequence ID" value="CAC47328"/>
    <property type="gene ID" value="SMc03965"/>
</dbReference>
<dbReference type="GeneID" id="89577164"/>
<dbReference type="KEGG" id="sme:SMc03965"/>
<dbReference type="PATRIC" id="fig|266834.11.peg.4258"/>
<dbReference type="eggNOG" id="COG2255">
    <property type="taxonomic scope" value="Bacteria"/>
</dbReference>
<dbReference type="HOGENOM" id="CLU_055599_1_0_5"/>
<dbReference type="OrthoDB" id="9804478at2"/>
<dbReference type="Proteomes" id="UP000001976">
    <property type="component" value="Chromosome"/>
</dbReference>
<dbReference type="GO" id="GO:0005737">
    <property type="term" value="C:cytoplasm"/>
    <property type="evidence" value="ECO:0007669"/>
    <property type="project" value="UniProtKB-SubCell"/>
</dbReference>
<dbReference type="GO" id="GO:0048476">
    <property type="term" value="C:Holliday junction resolvase complex"/>
    <property type="evidence" value="ECO:0007669"/>
    <property type="project" value="UniProtKB-UniRule"/>
</dbReference>
<dbReference type="GO" id="GO:0005524">
    <property type="term" value="F:ATP binding"/>
    <property type="evidence" value="ECO:0007669"/>
    <property type="project" value="UniProtKB-UniRule"/>
</dbReference>
<dbReference type="GO" id="GO:0016887">
    <property type="term" value="F:ATP hydrolysis activity"/>
    <property type="evidence" value="ECO:0007669"/>
    <property type="project" value="InterPro"/>
</dbReference>
<dbReference type="GO" id="GO:0000400">
    <property type="term" value="F:four-way junction DNA binding"/>
    <property type="evidence" value="ECO:0007669"/>
    <property type="project" value="UniProtKB-UniRule"/>
</dbReference>
<dbReference type="GO" id="GO:0009378">
    <property type="term" value="F:four-way junction helicase activity"/>
    <property type="evidence" value="ECO:0007669"/>
    <property type="project" value="InterPro"/>
</dbReference>
<dbReference type="GO" id="GO:0006310">
    <property type="term" value="P:DNA recombination"/>
    <property type="evidence" value="ECO:0007669"/>
    <property type="project" value="UniProtKB-UniRule"/>
</dbReference>
<dbReference type="GO" id="GO:0006281">
    <property type="term" value="P:DNA repair"/>
    <property type="evidence" value="ECO:0007669"/>
    <property type="project" value="UniProtKB-UniRule"/>
</dbReference>
<dbReference type="CDD" id="cd00009">
    <property type="entry name" value="AAA"/>
    <property type="match status" value="1"/>
</dbReference>
<dbReference type="Gene3D" id="1.10.8.60">
    <property type="match status" value="1"/>
</dbReference>
<dbReference type="Gene3D" id="3.40.50.300">
    <property type="entry name" value="P-loop containing nucleotide triphosphate hydrolases"/>
    <property type="match status" value="1"/>
</dbReference>
<dbReference type="Gene3D" id="1.10.10.10">
    <property type="entry name" value="Winged helix-like DNA-binding domain superfamily/Winged helix DNA-binding domain"/>
    <property type="match status" value="1"/>
</dbReference>
<dbReference type="HAMAP" id="MF_00016">
    <property type="entry name" value="DNA_HJ_migration_RuvB"/>
    <property type="match status" value="1"/>
</dbReference>
<dbReference type="InterPro" id="IPR003593">
    <property type="entry name" value="AAA+_ATPase"/>
</dbReference>
<dbReference type="InterPro" id="IPR041445">
    <property type="entry name" value="AAA_lid_4"/>
</dbReference>
<dbReference type="InterPro" id="IPR000641">
    <property type="entry name" value="CbxX/CfxQ"/>
</dbReference>
<dbReference type="InterPro" id="IPR004605">
    <property type="entry name" value="DNA_helicase_Holl-junc_RuvB"/>
</dbReference>
<dbReference type="InterPro" id="IPR027417">
    <property type="entry name" value="P-loop_NTPase"/>
</dbReference>
<dbReference type="InterPro" id="IPR008824">
    <property type="entry name" value="RuvB-like_N"/>
</dbReference>
<dbReference type="InterPro" id="IPR008823">
    <property type="entry name" value="RuvB_C"/>
</dbReference>
<dbReference type="InterPro" id="IPR036388">
    <property type="entry name" value="WH-like_DNA-bd_sf"/>
</dbReference>
<dbReference type="InterPro" id="IPR036390">
    <property type="entry name" value="WH_DNA-bd_sf"/>
</dbReference>
<dbReference type="NCBIfam" id="NF000868">
    <property type="entry name" value="PRK00080.1"/>
    <property type="match status" value="1"/>
</dbReference>
<dbReference type="NCBIfam" id="TIGR00635">
    <property type="entry name" value="ruvB"/>
    <property type="match status" value="1"/>
</dbReference>
<dbReference type="PANTHER" id="PTHR42848">
    <property type="match status" value="1"/>
</dbReference>
<dbReference type="PANTHER" id="PTHR42848:SF1">
    <property type="entry name" value="HOLLIDAY JUNCTION BRANCH MIGRATION COMPLEX SUBUNIT RUVB"/>
    <property type="match status" value="1"/>
</dbReference>
<dbReference type="Pfam" id="PF17864">
    <property type="entry name" value="AAA_lid_4"/>
    <property type="match status" value="1"/>
</dbReference>
<dbReference type="Pfam" id="PF05491">
    <property type="entry name" value="RuvB_C"/>
    <property type="match status" value="1"/>
</dbReference>
<dbReference type="Pfam" id="PF05496">
    <property type="entry name" value="RuvB_N"/>
    <property type="match status" value="1"/>
</dbReference>
<dbReference type="PRINTS" id="PR00819">
    <property type="entry name" value="CBXCFQXSUPER"/>
</dbReference>
<dbReference type="SMART" id="SM00382">
    <property type="entry name" value="AAA"/>
    <property type="match status" value="1"/>
</dbReference>
<dbReference type="SUPFAM" id="SSF52540">
    <property type="entry name" value="P-loop containing nucleoside triphosphate hydrolases"/>
    <property type="match status" value="1"/>
</dbReference>
<dbReference type="SUPFAM" id="SSF46785">
    <property type="entry name" value="Winged helix' DNA-binding domain"/>
    <property type="match status" value="1"/>
</dbReference>
<feature type="chain" id="PRO_0000165584" description="Holliday junction branch migration complex subunit RuvB">
    <location>
        <begin position="1"/>
        <end position="346"/>
    </location>
</feature>
<feature type="region of interest" description="Large ATPase domain (RuvB-L)" evidence="1">
    <location>
        <begin position="1"/>
        <end position="182"/>
    </location>
</feature>
<feature type="region of interest" description="Small ATPAse domain (RuvB-S)" evidence="1">
    <location>
        <begin position="183"/>
        <end position="253"/>
    </location>
</feature>
<feature type="region of interest" description="Head domain (RuvB-H)" evidence="1">
    <location>
        <begin position="256"/>
        <end position="346"/>
    </location>
</feature>
<feature type="binding site" evidence="1">
    <location>
        <position position="22"/>
    </location>
    <ligand>
        <name>ATP</name>
        <dbReference type="ChEBI" id="CHEBI:30616"/>
    </ligand>
</feature>
<feature type="binding site" evidence="1">
    <location>
        <position position="63"/>
    </location>
    <ligand>
        <name>ATP</name>
        <dbReference type="ChEBI" id="CHEBI:30616"/>
    </ligand>
</feature>
<feature type="binding site" evidence="1">
    <location>
        <position position="66"/>
    </location>
    <ligand>
        <name>ATP</name>
        <dbReference type="ChEBI" id="CHEBI:30616"/>
    </ligand>
</feature>
<feature type="binding site" evidence="1">
    <location>
        <position position="67"/>
    </location>
    <ligand>
        <name>ATP</name>
        <dbReference type="ChEBI" id="CHEBI:30616"/>
    </ligand>
</feature>
<feature type="binding site" evidence="1">
    <location>
        <position position="67"/>
    </location>
    <ligand>
        <name>Mg(2+)</name>
        <dbReference type="ChEBI" id="CHEBI:18420"/>
    </ligand>
</feature>
<feature type="binding site" evidence="1">
    <location>
        <position position="68"/>
    </location>
    <ligand>
        <name>ATP</name>
        <dbReference type="ChEBI" id="CHEBI:30616"/>
    </ligand>
</feature>
<feature type="binding site" evidence="1">
    <location>
        <begin position="129"/>
        <end position="131"/>
    </location>
    <ligand>
        <name>ATP</name>
        <dbReference type="ChEBI" id="CHEBI:30616"/>
    </ligand>
</feature>
<feature type="binding site" evidence="1">
    <location>
        <position position="172"/>
    </location>
    <ligand>
        <name>ATP</name>
        <dbReference type="ChEBI" id="CHEBI:30616"/>
    </ligand>
</feature>
<feature type="binding site" evidence="1">
    <location>
        <position position="182"/>
    </location>
    <ligand>
        <name>ATP</name>
        <dbReference type="ChEBI" id="CHEBI:30616"/>
    </ligand>
</feature>
<feature type="binding site" evidence="1">
    <location>
        <position position="219"/>
    </location>
    <ligand>
        <name>ATP</name>
        <dbReference type="ChEBI" id="CHEBI:30616"/>
    </ligand>
</feature>
<feature type="binding site" evidence="1">
    <location>
        <position position="292"/>
    </location>
    <ligand>
        <name>DNA</name>
        <dbReference type="ChEBI" id="CHEBI:16991"/>
    </ligand>
</feature>
<feature type="binding site" evidence="1">
    <location>
        <position position="311"/>
    </location>
    <ligand>
        <name>DNA</name>
        <dbReference type="ChEBI" id="CHEBI:16991"/>
    </ligand>
</feature>
<feature type="binding site" evidence="1">
    <location>
        <position position="316"/>
    </location>
    <ligand>
        <name>DNA</name>
        <dbReference type="ChEBI" id="CHEBI:16991"/>
    </ligand>
</feature>
<organism>
    <name type="scientific">Rhizobium meliloti (strain 1021)</name>
    <name type="common">Ensifer meliloti</name>
    <name type="synonym">Sinorhizobium meliloti</name>
    <dbReference type="NCBI Taxonomy" id="266834"/>
    <lineage>
        <taxon>Bacteria</taxon>
        <taxon>Pseudomonadati</taxon>
        <taxon>Pseudomonadota</taxon>
        <taxon>Alphaproteobacteria</taxon>
        <taxon>Hyphomicrobiales</taxon>
        <taxon>Rhizobiaceae</taxon>
        <taxon>Sinorhizobium/Ensifer group</taxon>
        <taxon>Sinorhizobium</taxon>
    </lineage>
</organism>
<gene>
    <name evidence="1" type="primary">ruvB</name>
    <name type="ordered locus">R02749</name>
    <name type="ORF">SMc03965</name>
</gene>
<reference key="1">
    <citation type="journal article" date="2001" name="Proc. Natl. Acad. Sci. U.S.A.">
        <title>Analysis of the chromosome sequence of the legume symbiont Sinorhizobium meliloti strain 1021.</title>
        <authorList>
            <person name="Capela D."/>
            <person name="Barloy-Hubler F."/>
            <person name="Gouzy J."/>
            <person name="Bothe G."/>
            <person name="Ampe F."/>
            <person name="Batut J."/>
            <person name="Boistard P."/>
            <person name="Becker A."/>
            <person name="Boutry M."/>
            <person name="Cadieu E."/>
            <person name="Dreano S."/>
            <person name="Gloux S."/>
            <person name="Godrie T."/>
            <person name="Goffeau A."/>
            <person name="Kahn D."/>
            <person name="Kiss E."/>
            <person name="Lelaure V."/>
            <person name="Masuy D."/>
            <person name="Pohl T."/>
            <person name="Portetelle D."/>
            <person name="Puehler A."/>
            <person name="Purnelle B."/>
            <person name="Ramsperger U."/>
            <person name="Renard C."/>
            <person name="Thebault P."/>
            <person name="Vandenbol M."/>
            <person name="Weidner S."/>
            <person name="Galibert F."/>
        </authorList>
    </citation>
    <scope>NUCLEOTIDE SEQUENCE [LARGE SCALE GENOMIC DNA]</scope>
    <source>
        <strain>1021</strain>
    </source>
</reference>
<reference key="2">
    <citation type="journal article" date="2001" name="Science">
        <title>The composite genome of the legume symbiont Sinorhizobium meliloti.</title>
        <authorList>
            <person name="Galibert F."/>
            <person name="Finan T.M."/>
            <person name="Long S.R."/>
            <person name="Puehler A."/>
            <person name="Abola P."/>
            <person name="Ampe F."/>
            <person name="Barloy-Hubler F."/>
            <person name="Barnett M.J."/>
            <person name="Becker A."/>
            <person name="Boistard P."/>
            <person name="Bothe G."/>
            <person name="Boutry M."/>
            <person name="Bowser L."/>
            <person name="Buhrmester J."/>
            <person name="Cadieu E."/>
            <person name="Capela D."/>
            <person name="Chain P."/>
            <person name="Cowie A."/>
            <person name="Davis R.W."/>
            <person name="Dreano S."/>
            <person name="Federspiel N.A."/>
            <person name="Fisher R.F."/>
            <person name="Gloux S."/>
            <person name="Godrie T."/>
            <person name="Goffeau A."/>
            <person name="Golding B."/>
            <person name="Gouzy J."/>
            <person name="Gurjal M."/>
            <person name="Hernandez-Lucas I."/>
            <person name="Hong A."/>
            <person name="Huizar L."/>
            <person name="Hyman R.W."/>
            <person name="Jones T."/>
            <person name="Kahn D."/>
            <person name="Kahn M.L."/>
            <person name="Kalman S."/>
            <person name="Keating D.H."/>
            <person name="Kiss E."/>
            <person name="Komp C."/>
            <person name="Lelaure V."/>
            <person name="Masuy D."/>
            <person name="Palm C."/>
            <person name="Peck M.C."/>
            <person name="Pohl T.M."/>
            <person name="Portetelle D."/>
            <person name="Purnelle B."/>
            <person name="Ramsperger U."/>
            <person name="Surzycki R."/>
            <person name="Thebault P."/>
            <person name="Vandenbol M."/>
            <person name="Vorhoelter F.J."/>
            <person name="Weidner S."/>
            <person name="Wells D.H."/>
            <person name="Wong K."/>
            <person name="Yeh K.-C."/>
            <person name="Batut J."/>
        </authorList>
    </citation>
    <scope>NUCLEOTIDE SEQUENCE [LARGE SCALE GENOMIC DNA]</scope>
    <source>
        <strain>1021</strain>
    </source>
</reference>
<name>RUVB_RHIME</name>
<protein>
    <recommendedName>
        <fullName evidence="1">Holliday junction branch migration complex subunit RuvB</fullName>
        <ecNumber evidence="1">3.6.4.-</ecNumber>
    </recommendedName>
</protein>
<evidence type="ECO:0000255" key="1">
    <source>
        <dbReference type="HAMAP-Rule" id="MF_00016"/>
    </source>
</evidence>
<accession>Q92M92</accession>
<proteinExistence type="inferred from homology"/>
<sequence>MSEAARLIAPEKRGEDLDATMRPQTLDEFTGQAEARANLKIFIEAARNRGEALDHVLFVGPPGLGKTTLAQIMAKELGVNFRSTSGPVIAKAGDLAALLTNLEERDVLFIDEIHRLNPAVEEILYPAMEDFQLDLIIGEGPAARSVKIDLAKFTLVAATTRLGLLTTPLRDRFGIPVRLNFYTVEELELIVRRGARLMGLGMTDEGAREIARRARGTPRIAGRLLRRVRDFAEVARAEAVTLKIADEALTRLLVDSMGLDQLDRRYLTMIAQNFGGGPVGIETIAAGLSEPRDAIEDIIEPYLIQQGFIQRTPRGRVLTANAWKHLGLNPPRDVEASQFRLTLEDD</sequence>